<protein>
    <recommendedName>
        <fullName evidence="1">Translation initiation factor 5A</fullName>
    </recommendedName>
    <alternativeName>
        <fullName evidence="1">Hypusine-containing protein</fullName>
    </alternativeName>
    <alternativeName>
        <fullName evidence="1">eIF-5A</fullName>
    </alternativeName>
</protein>
<feature type="chain" id="PRO_1000202604" description="Translation initiation factor 5A">
    <location>
        <begin position="1"/>
        <end position="131"/>
    </location>
</feature>
<feature type="modified residue" description="Hypusine" evidence="1">
    <location>
        <position position="36"/>
    </location>
</feature>
<name>IF5A_SACI6</name>
<organism>
    <name type="scientific">Saccharolobus islandicus (strain M.16.4 / Kamchatka #3)</name>
    <name type="common">Sulfolobus islandicus</name>
    <dbReference type="NCBI Taxonomy" id="426118"/>
    <lineage>
        <taxon>Archaea</taxon>
        <taxon>Thermoproteota</taxon>
        <taxon>Thermoprotei</taxon>
        <taxon>Sulfolobales</taxon>
        <taxon>Sulfolobaceae</taxon>
        <taxon>Saccharolobus</taxon>
    </lineage>
</organism>
<reference key="1">
    <citation type="journal article" date="2009" name="Proc. Natl. Acad. Sci. U.S.A.">
        <title>Biogeography of the Sulfolobus islandicus pan-genome.</title>
        <authorList>
            <person name="Reno M.L."/>
            <person name="Held N.L."/>
            <person name="Fields C.J."/>
            <person name="Burke P.V."/>
            <person name="Whitaker R.J."/>
        </authorList>
    </citation>
    <scope>NUCLEOTIDE SEQUENCE [LARGE SCALE GENOMIC DNA]</scope>
    <source>
        <strain>M.16.4 / Kamchatka #3</strain>
    </source>
</reference>
<comment type="function">
    <text evidence="1">Functions by promoting the formation of the first peptide bond.</text>
</comment>
<comment type="subcellular location">
    <subcellularLocation>
        <location evidence="1">Cytoplasm</location>
    </subcellularLocation>
</comment>
<comment type="similarity">
    <text evidence="1">Belongs to the eIF-5A family.</text>
</comment>
<evidence type="ECO:0000255" key="1">
    <source>
        <dbReference type="HAMAP-Rule" id="MF_00085"/>
    </source>
</evidence>
<dbReference type="EMBL" id="CP001402">
    <property type="protein sequence ID" value="ACR41841.1"/>
    <property type="molecule type" value="Genomic_DNA"/>
</dbReference>
<dbReference type="RefSeq" id="WP_012711261.1">
    <property type="nucleotide sequence ID" value="NC_012726.1"/>
</dbReference>
<dbReference type="SMR" id="C4KGX7"/>
<dbReference type="KEGG" id="sid:M164_1237"/>
<dbReference type="HOGENOM" id="CLU_102600_3_0_2"/>
<dbReference type="Proteomes" id="UP000001479">
    <property type="component" value="Chromosome"/>
</dbReference>
<dbReference type="GO" id="GO:0005737">
    <property type="term" value="C:cytoplasm"/>
    <property type="evidence" value="ECO:0007669"/>
    <property type="project" value="UniProtKB-SubCell"/>
</dbReference>
<dbReference type="GO" id="GO:0043022">
    <property type="term" value="F:ribosome binding"/>
    <property type="evidence" value="ECO:0007669"/>
    <property type="project" value="InterPro"/>
</dbReference>
<dbReference type="GO" id="GO:0003723">
    <property type="term" value="F:RNA binding"/>
    <property type="evidence" value="ECO:0007669"/>
    <property type="project" value="InterPro"/>
</dbReference>
<dbReference type="GO" id="GO:0003746">
    <property type="term" value="F:translation elongation factor activity"/>
    <property type="evidence" value="ECO:0007669"/>
    <property type="project" value="InterPro"/>
</dbReference>
<dbReference type="GO" id="GO:0003743">
    <property type="term" value="F:translation initiation factor activity"/>
    <property type="evidence" value="ECO:0007669"/>
    <property type="project" value="UniProtKB-UniRule"/>
</dbReference>
<dbReference type="GO" id="GO:0045901">
    <property type="term" value="P:positive regulation of translational elongation"/>
    <property type="evidence" value="ECO:0007669"/>
    <property type="project" value="InterPro"/>
</dbReference>
<dbReference type="GO" id="GO:0045905">
    <property type="term" value="P:positive regulation of translational termination"/>
    <property type="evidence" value="ECO:0007669"/>
    <property type="project" value="InterPro"/>
</dbReference>
<dbReference type="CDD" id="cd04467">
    <property type="entry name" value="S1_aIF5A"/>
    <property type="match status" value="1"/>
</dbReference>
<dbReference type="FunFam" id="2.30.30.30:FF:000038">
    <property type="entry name" value="Translation initiation factor 5A"/>
    <property type="match status" value="1"/>
</dbReference>
<dbReference type="FunFam" id="2.40.50.140:FF:000334">
    <property type="entry name" value="Translation initiation factor 5A"/>
    <property type="match status" value="1"/>
</dbReference>
<dbReference type="Gene3D" id="2.30.30.30">
    <property type="match status" value="1"/>
</dbReference>
<dbReference type="Gene3D" id="2.40.50.140">
    <property type="entry name" value="Nucleic acid-binding proteins"/>
    <property type="match status" value="1"/>
</dbReference>
<dbReference type="HAMAP" id="MF_00085">
    <property type="entry name" value="eIF_5A"/>
    <property type="match status" value="1"/>
</dbReference>
<dbReference type="InterPro" id="IPR001884">
    <property type="entry name" value="IF5A-like"/>
</dbReference>
<dbReference type="InterPro" id="IPR048670">
    <property type="entry name" value="IF5A-like_N"/>
</dbReference>
<dbReference type="InterPro" id="IPR012340">
    <property type="entry name" value="NA-bd_OB-fold"/>
</dbReference>
<dbReference type="InterPro" id="IPR014722">
    <property type="entry name" value="Rib_uL2_dom2"/>
</dbReference>
<dbReference type="InterPro" id="IPR019769">
    <property type="entry name" value="Trans_elong_IF5A_hypusine_site"/>
</dbReference>
<dbReference type="InterPro" id="IPR022847">
    <property type="entry name" value="Transl_elong_IF5A_arc"/>
</dbReference>
<dbReference type="InterPro" id="IPR020189">
    <property type="entry name" value="Transl_elong_IF5A_C"/>
</dbReference>
<dbReference type="InterPro" id="IPR008991">
    <property type="entry name" value="Translation_prot_SH3-like_sf"/>
</dbReference>
<dbReference type="NCBIfam" id="TIGR00037">
    <property type="entry name" value="eIF_5A"/>
    <property type="match status" value="1"/>
</dbReference>
<dbReference type="NCBIfam" id="NF003076">
    <property type="entry name" value="PRK03999.1"/>
    <property type="match status" value="1"/>
</dbReference>
<dbReference type="PANTHER" id="PTHR11673">
    <property type="entry name" value="TRANSLATION INITIATION FACTOR 5A FAMILY MEMBER"/>
    <property type="match status" value="1"/>
</dbReference>
<dbReference type="Pfam" id="PF01287">
    <property type="entry name" value="eIF-5a"/>
    <property type="match status" value="1"/>
</dbReference>
<dbReference type="Pfam" id="PF21485">
    <property type="entry name" value="IF5A-like_N"/>
    <property type="match status" value="1"/>
</dbReference>
<dbReference type="PIRSF" id="PIRSF003025">
    <property type="entry name" value="eIF5A"/>
    <property type="match status" value="1"/>
</dbReference>
<dbReference type="SMART" id="SM01376">
    <property type="entry name" value="eIF-5a"/>
    <property type="match status" value="1"/>
</dbReference>
<dbReference type="SUPFAM" id="SSF50249">
    <property type="entry name" value="Nucleic acid-binding proteins"/>
    <property type="match status" value="1"/>
</dbReference>
<dbReference type="SUPFAM" id="SSF50104">
    <property type="entry name" value="Translation proteins SH3-like domain"/>
    <property type="match status" value="1"/>
</dbReference>
<dbReference type="PROSITE" id="PS00302">
    <property type="entry name" value="IF5A_HYPUSINE"/>
    <property type="match status" value="1"/>
</dbReference>
<proteinExistence type="inferred from homology"/>
<gene>
    <name type="primary">eIF5A</name>
    <name type="ordered locus">M164_1237</name>
</gene>
<keyword id="KW-0963">Cytoplasm</keyword>
<keyword id="KW-0385">Hypusine</keyword>
<keyword id="KW-0396">Initiation factor</keyword>
<keyword id="KW-0648">Protein biosynthesis</keyword>
<sequence length="131" mass="14535">MSITYTTVGELKVGSYVVIDGEPCRVVEVTKAKTGKHGSAKANVVAIGVFSGAKKTLMAPVDQQVEVPIIEKHIGQIIADMGDKIQVMDLETYETFEIEKPTEDELASKIRPNAELEYWEIMGRRKIVRVK</sequence>
<accession>C4KGX7</accession>